<comment type="function">
    <text evidence="7 8">Component of the chloroplast ribosome (chloro-ribosome), a dedicated translation machinery responsible for the synthesis of chloroplast genome-encoded proteins, including proteins of the transcription and translation machinery and components of the photosynthetic apparatus.</text>
</comment>
<comment type="subunit">
    <text evidence="3 4">Component of the chloroplast large ribosomal subunit (LSU). Mature 70S chloroplast ribosomes of higher plants consist of a small (30S) and a large (50S) subunit. The 30S small subunit contains 1 molecule of ribosomal RNA (16S rRNA) and 24 different proteins. The 50S large subunit contains 3 rRNA molecules (23S, 5S and 4.5S rRNA) and 33 different proteins.</text>
</comment>
<comment type="subcellular location">
    <subcellularLocation>
        <location evidence="3 4">Plastid</location>
        <location evidence="3 4">Chloroplast</location>
    </subcellularLocation>
</comment>
<comment type="mass spectrometry"/>
<comment type="similarity">
    <text evidence="1">Belongs to the universal ribosomal protein uL3 family.</text>
</comment>
<reference key="1">
    <citation type="journal article" date="2014" name="Nature">
        <title>The genome of the recently domesticated crop plant sugar beet (Beta vulgaris).</title>
        <authorList>
            <person name="Dohm J.C."/>
            <person name="Minoche A.E."/>
            <person name="Holtgraewe D."/>
            <person name="Capella-Gutierrez S."/>
            <person name="Zakrzewski F."/>
            <person name="Tafer H."/>
            <person name="Rupp O."/>
            <person name="Soerensen T.R."/>
            <person name="Stracke R."/>
            <person name="Reinhardt R."/>
            <person name="Goesmann A."/>
            <person name="Kraft T."/>
            <person name="Schulz B."/>
            <person name="Stadler P.F."/>
            <person name="Schmidt T."/>
            <person name="Gabaldon T."/>
            <person name="Lehrach H."/>
            <person name="Weisshaar B."/>
            <person name="Himmelbauer H."/>
        </authorList>
    </citation>
    <scope>NUCLEOTIDE SEQUENCE [LARGE SCALE GENOMIC DNA]</scope>
    <source>
        <strain>cv. Viroflay</strain>
        <tissue>Leaf</tissue>
    </source>
</reference>
<reference key="2">
    <citation type="journal article" date="2000" name="J. Biol. Chem.">
        <title>The plastid ribosomal proteins. Identification of all the proteins in the 50S subunit of an organelle ribosome (chloroplast).</title>
        <authorList>
            <person name="Yamaguchi K."/>
            <person name="Subramanian A.R."/>
        </authorList>
    </citation>
    <scope>PROTEIN SEQUENCE OF 85-129</scope>
    <scope>SUBUNIT</scope>
    <scope>SUBCELLULAR LOCATION</scope>
    <scope>MASS SPECTROMETRY</scope>
    <source>
        <strain>cv. Alwaro</strain>
        <tissue>Leaf</tissue>
    </source>
</reference>
<reference key="3">
    <citation type="journal article" date="2007" name="Proc. Natl. Acad. Sci. U.S.A.">
        <title>Cryo-EM study of the spinach chloroplast ribosome reveals the structural and functional roles of plastid-specific ribosomal proteins.</title>
        <authorList>
            <person name="Sharma M.R."/>
            <person name="Wilson D.N."/>
            <person name="Datta P.P."/>
            <person name="Barat C."/>
            <person name="Schluenzen F."/>
            <person name="Fucini P."/>
            <person name="Agrawal R.K."/>
        </authorList>
    </citation>
    <scope>STRUCTURE BY ELECTRON MICROSCOPY (9.4 ANGSTROMS)</scope>
</reference>
<reference key="4">
    <citation type="journal article" date="2016" name="Sci. Rep.">
        <title>Cryo-EM structure of the large subunit of the spinach chloroplast ribosome.</title>
        <authorList>
            <person name="Ahmed T."/>
            <person name="Yin Z."/>
            <person name="Bhushan S."/>
        </authorList>
    </citation>
    <scope>STRUCTURE BY ELECTRON MICROSCOPY (3.50 ANGSTROMS)</scope>
</reference>
<reference key="5">
    <citation type="journal article" date="2017" name="EMBO J.">
        <title>The complete structure of the chloroplast 70S ribosome in complex with translation factor pY.</title>
        <authorList>
            <person name="Bieri P."/>
            <person name="Leibundgut M."/>
            <person name="Saurer M."/>
            <person name="Boehringer D."/>
            <person name="Ban N."/>
        </authorList>
    </citation>
    <scope>STRUCTURE BY ELECTRON MICROSCOPY (3.25 ANGSTROMS)</scope>
    <scope>SUBUNIT</scope>
    <scope>SUBCELLULAR LOCATION</scope>
</reference>
<keyword id="KW-0002">3D-structure</keyword>
<keyword id="KW-0150">Chloroplast</keyword>
<keyword id="KW-0903">Direct protein sequencing</keyword>
<keyword id="KW-0934">Plastid</keyword>
<keyword id="KW-1185">Reference proteome</keyword>
<keyword id="KW-0687">Ribonucleoprotein</keyword>
<keyword id="KW-0689">Ribosomal protein</keyword>
<keyword id="KW-0694">RNA-binding</keyword>
<keyword id="KW-0699">rRNA-binding</keyword>
<keyword id="KW-0809">Transit peptide</keyword>
<protein>
    <recommendedName>
        <fullName evidence="6">Large ribosomal subunit protein uL3c</fullName>
    </recommendedName>
    <alternativeName>
        <fullName evidence="5">50S ribosomal protein L3, chloroplastic</fullName>
    </alternativeName>
</protein>
<accession>P82191</accession>
<accession>A0A0K9QEC7</accession>
<evidence type="ECO:0000255" key="1"/>
<evidence type="ECO:0000256" key="2">
    <source>
        <dbReference type="SAM" id="MobiDB-lite"/>
    </source>
</evidence>
<evidence type="ECO:0000269" key="3">
    <source>
    </source>
</evidence>
<evidence type="ECO:0000269" key="4">
    <source>
    </source>
</evidence>
<evidence type="ECO:0000303" key="5">
    <source>
    </source>
</evidence>
<evidence type="ECO:0000303" key="6">
    <source>
    </source>
</evidence>
<evidence type="ECO:0000305" key="7">
    <source>
    </source>
</evidence>
<evidence type="ECO:0000305" key="8">
    <source>
    </source>
</evidence>
<evidence type="ECO:0007829" key="9">
    <source>
        <dbReference type="PDB" id="5H1S"/>
    </source>
</evidence>
<evidence type="ECO:0007829" key="10">
    <source>
        <dbReference type="PDB" id="5MMI"/>
    </source>
</evidence>
<evidence type="ECO:0007829" key="11">
    <source>
        <dbReference type="PDB" id="5X8T"/>
    </source>
</evidence>
<name>RK3_SPIOL</name>
<feature type="transit peptide" description="Chloroplast" evidence="3">
    <location>
        <begin position="1"/>
        <end position="84"/>
    </location>
</feature>
<feature type="chain" id="PRO_0000249411" description="Large ribosomal subunit protein uL3c">
    <location>
        <begin position="85"/>
        <end position="305"/>
    </location>
</feature>
<feature type="region of interest" description="Disordered" evidence="2">
    <location>
        <begin position="228"/>
        <end position="256"/>
    </location>
</feature>
<feature type="strand" evidence="11">
    <location>
        <begin position="87"/>
        <end position="89"/>
    </location>
</feature>
<feature type="strand" evidence="10">
    <location>
        <begin position="92"/>
        <end position="103"/>
    </location>
</feature>
<feature type="strand" evidence="10">
    <location>
        <begin position="109"/>
        <end position="116"/>
    </location>
</feature>
<feature type="strand" evidence="10">
    <location>
        <begin position="122"/>
        <end position="127"/>
    </location>
</feature>
<feature type="helix" evidence="10">
    <location>
        <begin position="129"/>
        <end position="132"/>
    </location>
</feature>
<feature type="strand" evidence="10">
    <location>
        <begin position="136"/>
        <end position="140"/>
    </location>
</feature>
<feature type="turn" evidence="10">
    <location>
        <begin position="146"/>
        <end position="148"/>
    </location>
</feature>
<feature type="helix" evidence="10">
    <location>
        <begin position="151"/>
        <end position="158"/>
    </location>
</feature>
<feature type="turn" evidence="10">
    <location>
        <begin position="159"/>
        <end position="161"/>
    </location>
</feature>
<feature type="strand" evidence="10">
    <location>
        <begin position="168"/>
        <end position="172"/>
    </location>
</feature>
<feature type="helix" evidence="10">
    <location>
        <begin position="187"/>
        <end position="190"/>
    </location>
</feature>
<feature type="turn" evidence="9">
    <location>
        <begin position="191"/>
        <end position="193"/>
    </location>
</feature>
<feature type="strand" evidence="10">
    <location>
        <begin position="196"/>
        <end position="202"/>
    </location>
</feature>
<feature type="helix" evidence="10">
    <location>
        <begin position="211"/>
        <end position="215"/>
    </location>
</feature>
<feature type="strand" evidence="10">
    <location>
        <begin position="222"/>
        <end position="225"/>
    </location>
</feature>
<feature type="turn" evidence="10">
    <location>
        <begin position="239"/>
        <end position="241"/>
    </location>
</feature>
<feature type="strand" evidence="10">
    <location>
        <begin position="257"/>
        <end position="270"/>
    </location>
</feature>
<feature type="turn" evidence="10">
    <location>
        <begin position="271"/>
        <end position="274"/>
    </location>
</feature>
<feature type="strand" evidence="10">
    <location>
        <begin position="275"/>
        <end position="280"/>
    </location>
</feature>
<feature type="strand" evidence="11">
    <location>
        <begin position="283"/>
        <end position="285"/>
    </location>
</feature>
<feature type="strand" evidence="10">
    <location>
        <begin position="290"/>
        <end position="294"/>
    </location>
</feature>
<feature type="turn" evidence="10">
    <location>
        <begin position="298"/>
        <end position="301"/>
    </location>
</feature>
<sequence>MAAILPTFSIKSSSCTYSSSKRSLSSPKAVSLSSSVNGTPKVQSLRLSTSFVCSPNQIIKLKSVSPSRSTQLRRAVGGLEIKMMSVDAGIGVMGTKLGMMSFFEEDGTVVPVTVIGFKEGNIVTQVKTESTDGYNAVQVGYERLRDRKLTMPERGHLNKAGVIPMRHLQEFRLVSVDDFTPSQKLLFEELFKEGDMVDISGTTIGKGFQGGIKRHNFKRGLMTHGSKSHRALGSIGAGTTPGHVYKGKKMPGRMGGTKTKIRKLKIMKIDTDLRVVMIKGAVPGKPGNLLRLAPAKIVGKNIPKN</sequence>
<proteinExistence type="evidence at protein level"/>
<dbReference type="EMBL" id="KQ197093">
    <property type="protein sequence ID" value="KNA04906.1"/>
    <property type="molecule type" value="Genomic_DNA"/>
</dbReference>
<dbReference type="PDB" id="4V61">
    <property type="method" value="EM"/>
    <property type="resolution" value="9.40 A"/>
    <property type="chains" value="F=88-129"/>
</dbReference>
<dbReference type="PDB" id="5H1S">
    <property type="method" value="EM"/>
    <property type="resolution" value="3.50 A"/>
    <property type="chains" value="F=85-305"/>
</dbReference>
<dbReference type="PDB" id="5MLC">
    <property type="method" value="EM"/>
    <property type="resolution" value="3.90 A"/>
    <property type="chains" value="E=1-305"/>
</dbReference>
<dbReference type="PDB" id="5MMI">
    <property type="method" value="EM"/>
    <property type="resolution" value="3.25 A"/>
    <property type="chains" value="D=1-305"/>
</dbReference>
<dbReference type="PDB" id="5MMM">
    <property type="method" value="EM"/>
    <property type="resolution" value="3.40 A"/>
    <property type="chains" value="D=1-305"/>
</dbReference>
<dbReference type="PDB" id="5X8P">
    <property type="method" value="EM"/>
    <property type="resolution" value="3.40 A"/>
    <property type="chains" value="D=85-305"/>
</dbReference>
<dbReference type="PDB" id="5X8T">
    <property type="method" value="EM"/>
    <property type="resolution" value="3.30 A"/>
    <property type="chains" value="D=85-305"/>
</dbReference>
<dbReference type="PDB" id="6ERI">
    <property type="method" value="EM"/>
    <property type="resolution" value="3.00 A"/>
    <property type="chains" value="AD=85-305"/>
</dbReference>
<dbReference type="PDBsum" id="4V61"/>
<dbReference type="PDBsum" id="5H1S"/>
<dbReference type="PDBsum" id="5MLC"/>
<dbReference type="PDBsum" id="5MMI"/>
<dbReference type="PDBsum" id="5MMM"/>
<dbReference type="PDBsum" id="5X8P"/>
<dbReference type="PDBsum" id="5X8T"/>
<dbReference type="PDBsum" id="6ERI"/>
<dbReference type="EMDB" id="EMD-3525"/>
<dbReference type="EMDB" id="EMD-3531"/>
<dbReference type="EMDB" id="EMD-3533"/>
<dbReference type="EMDB" id="EMD-3941"/>
<dbReference type="EMDB" id="EMD-6709"/>
<dbReference type="EMDB" id="EMD-6711"/>
<dbReference type="EMDB" id="EMD-9572"/>
<dbReference type="SMR" id="P82191"/>
<dbReference type="IntAct" id="P82191">
    <property type="interactions" value="1"/>
</dbReference>
<dbReference type="STRING" id="3562.P82191"/>
<dbReference type="OrthoDB" id="274683at2759"/>
<dbReference type="Proteomes" id="UP001155700">
    <property type="component" value="Unplaced"/>
</dbReference>
<dbReference type="GO" id="GO:0009941">
    <property type="term" value="C:chloroplast envelope"/>
    <property type="evidence" value="ECO:0007669"/>
    <property type="project" value="TreeGrafter"/>
</dbReference>
<dbReference type="GO" id="GO:1990904">
    <property type="term" value="C:ribonucleoprotein complex"/>
    <property type="evidence" value="ECO:0007669"/>
    <property type="project" value="UniProtKB-KW"/>
</dbReference>
<dbReference type="GO" id="GO:0005840">
    <property type="term" value="C:ribosome"/>
    <property type="evidence" value="ECO:0007669"/>
    <property type="project" value="UniProtKB-KW"/>
</dbReference>
<dbReference type="GO" id="GO:0019843">
    <property type="term" value="F:rRNA binding"/>
    <property type="evidence" value="ECO:0007669"/>
    <property type="project" value="UniProtKB-KW"/>
</dbReference>
<dbReference type="GO" id="GO:0003735">
    <property type="term" value="F:structural constituent of ribosome"/>
    <property type="evidence" value="ECO:0000318"/>
    <property type="project" value="GO_Central"/>
</dbReference>
<dbReference type="GO" id="GO:0006412">
    <property type="term" value="P:translation"/>
    <property type="evidence" value="ECO:0007669"/>
    <property type="project" value="InterPro"/>
</dbReference>
<dbReference type="FunFam" id="3.30.160.810:FF:000001">
    <property type="entry name" value="50S ribosomal protein L3"/>
    <property type="match status" value="1"/>
</dbReference>
<dbReference type="FunFam" id="2.40.30.10:FF:000065">
    <property type="entry name" value="50S ribosomal protein L3, chloroplastic"/>
    <property type="match status" value="1"/>
</dbReference>
<dbReference type="Gene3D" id="3.30.160.810">
    <property type="match status" value="1"/>
</dbReference>
<dbReference type="Gene3D" id="2.40.30.10">
    <property type="entry name" value="Translation factors"/>
    <property type="match status" value="1"/>
</dbReference>
<dbReference type="HAMAP" id="MF_01325_B">
    <property type="entry name" value="Ribosomal_uL3_B"/>
    <property type="match status" value="1"/>
</dbReference>
<dbReference type="InterPro" id="IPR000597">
    <property type="entry name" value="Ribosomal_uL3"/>
</dbReference>
<dbReference type="InterPro" id="IPR019927">
    <property type="entry name" value="Ribosomal_uL3_bac/org-type"/>
</dbReference>
<dbReference type="InterPro" id="IPR019926">
    <property type="entry name" value="Ribosomal_uL3_CS"/>
</dbReference>
<dbReference type="InterPro" id="IPR009000">
    <property type="entry name" value="Transl_B-barrel_sf"/>
</dbReference>
<dbReference type="NCBIfam" id="TIGR03625">
    <property type="entry name" value="L3_bact"/>
    <property type="match status" value="1"/>
</dbReference>
<dbReference type="PANTHER" id="PTHR11229">
    <property type="entry name" value="50S RIBOSOMAL PROTEIN L3"/>
    <property type="match status" value="1"/>
</dbReference>
<dbReference type="PANTHER" id="PTHR11229:SF16">
    <property type="entry name" value="LARGE RIBOSOMAL SUBUNIT PROTEIN UL3C"/>
    <property type="match status" value="1"/>
</dbReference>
<dbReference type="Pfam" id="PF00297">
    <property type="entry name" value="Ribosomal_L3"/>
    <property type="match status" value="1"/>
</dbReference>
<dbReference type="SUPFAM" id="SSF50447">
    <property type="entry name" value="Translation proteins"/>
    <property type="match status" value="1"/>
</dbReference>
<dbReference type="PROSITE" id="PS00474">
    <property type="entry name" value="RIBOSOMAL_L3"/>
    <property type="match status" value="1"/>
</dbReference>
<organism>
    <name type="scientific">Spinacia oleracea</name>
    <name type="common">Spinach</name>
    <dbReference type="NCBI Taxonomy" id="3562"/>
    <lineage>
        <taxon>Eukaryota</taxon>
        <taxon>Viridiplantae</taxon>
        <taxon>Streptophyta</taxon>
        <taxon>Embryophyta</taxon>
        <taxon>Tracheophyta</taxon>
        <taxon>Spermatophyta</taxon>
        <taxon>Magnoliopsida</taxon>
        <taxon>eudicotyledons</taxon>
        <taxon>Gunneridae</taxon>
        <taxon>Pentapetalae</taxon>
        <taxon>Caryophyllales</taxon>
        <taxon>Chenopodiaceae</taxon>
        <taxon>Chenopodioideae</taxon>
        <taxon>Anserineae</taxon>
        <taxon>Spinacia</taxon>
    </lineage>
</organism>
<gene>
    <name type="primary">RPL3</name>
    <name type="ORF">SOVF_195350</name>
</gene>